<protein>
    <recommendedName>
        <fullName evidence="6">Geranyl diphosphate phosphohydrolase</fullName>
        <ecNumber evidence="4">3.6.1.68</ecNumber>
    </recommendedName>
    <alternativeName>
        <fullName evidence="5">Nudix hydrolase 1</fullName>
        <shortName evidence="5">RhNUDX1</shortName>
    </alternativeName>
</protein>
<accession>M4I1C6</accession>
<proteinExistence type="evidence at protein level"/>
<comment type="function">
    <text evidence="4">Involved in a cytosolic pathway for the biosynthesis of free monoterpene alcohols that contribute to fragrance. Lacks terpene synthase activity, but has a diphosphohydrolase activity with geranyl diphosphate and farnesyl diphosphate as substrates. No activity with 8-oxo-dGTP and dGTP and unable to dephosphorylate geranyl phosphate to geraniol.</text>
</comment>
<comment type="catalytic activity">
    <reaction evidence="4">
        <text>(2E)-geranyl diphosphate + H2O = (2E)-geranyl phosphate + phosphate + H(+)</text>
        <dbReference type="Rhea" id="RHEA:47944"/>
        <dbReference type="ChEBI" id="CHEBI:15377"/>
        <dbReference type="ChEBI" id="CHEBI:15378"/>
        <dbReference type="ChEBI" id="CHEBI:43474"/>
        <dbReference type="ChEBI" id="CHEBI:58057"/>
        <dbReference type="ChEBI" id="CHEBI:88107"/>
        <dbReference type="EC" id="3.6.1.68"/>
    </reaction>
</comment>
<comment type="biophysicochemical properties">
    <kinetics>
        <KM evidence="4">140 nM for geranyl diphosphate</KM>
        <KM evidence="4">480 nM for farnesyl diphosphate</KM>
        <text evidence="4">kcat is 0.02 sec(-1) with geranyl diphosphate as substrate. kcat is 0.0033 sec(-1) with farnesyl diphosphate as substrate.</text>
    </kinetics>
    <phDependence>
        <text evidence="4">Optimum pH is 8.0.</text>
    </phDependence>
</comment>
<comment type="subcellular location">
    <subcellularLocation>
        <location evidence="4">Cytoplasm</location>
    </subcellularLocation>
</comment>
<comment type="tissue specificity">
    <text evidence="4">Expressed in petals. Little or no expression in stamens, sepals or young leaves.</text>
</comment>
<comment type="developmental stage">
    <text evidence="4">Increased expression at later stages of flower development.</text>
</comment>
<comment type="similarity">
    <text evidence="3">Belongs to the Nudix hydrolase family.</text>
</comment>
<feature type="chain" id="PRO_0000440620" description="Geranyl diphosphate phosphohydrolase">
    <location>
        <begin position="1"/>
        <end position="150"/>
    </location>
</feature>
<feature type="domain" description="Nudix hydrolase" evidence="2">
    <location>
        <begin position="14"/>
        <end position="147"/>
    </location>
</feature>
<feature type="short sequence motif" description="Nudix box" evidence="2">
    <location>
        <begin position="48"/>
        <end position="69"/>
    </location>
</feature>
<feature type="binding site" evidence="1">
    <location>
        <position position="63"/>
    </location>
    <ligand>
        <name>Mg(2+)</name>
        <dbReference type="ChEBI" id="CHEBI:18420"/>
    </ligand>
</feature>
<feature type="binding site" evidence="1">
    <location>
        <position position="67"/>
    </location>
    <ligand>
        <name>Mg(2+)</name>
        <dbReference type="ChEBI" id="CHEBI:18420"/>
    </ligand>
</feature>
<feature type="strand" evidence="8">
    <location>
        <begin position="15"/>
        <end position="25"/>
    </location>
</feature>
<feature type="strand" evidence="8">
    <location>
        <begin position="28"/>
        <end position="34"/>
    </location>
</feature>
<feature type="strand" evidence="8">
    <location>
        <begin position="47"/>
        <end position="49"/>
    </location>
</feature>
<feature type="helix" evidence="8">
    <location>
        <begin position="56"/>
        <end position="68"/>
    </location>
</feature>
<feature type="strand" evidence="8">
    <location>
        <begin position="72"/>
        <end position="84"/>
    </location>
</feature>
<feature type="strand" evidence="8">
    <location>
        <begin position="93"/>
        <end position="105"/>
    </location>
</feature>
<feature type="turn" evidence="8">
    <location>
        <begin position="115"/>
        <end position="117"/>
    </location>
</feature>
<feature type="strand" evidence="8">
    <location>
        <begin position="118"/>
        <end position="125"/>
    </location>
</feature>
<feature type="helix" evidence="8">
    <location>
        <begin position="126"/>
        <end position="128"/>
    </location>
</feature>
<feature type="strand" evidence="8">
    <location>
        <begin position="131"/>
        <end position="133"/>
    </location>
</feature>
<feature type="helix" evidence="8">
    <location>
        <begin position="135"/>
        <end position="142"/>
    </location>
</feature>
<keyword id="KW-0002">3D-structure</keyword>
<keyword id="KW-0963">Cytoplasm</keyword>
<keyword id="KW-0378">Hydrolase</keyword>
<keyword id="KW-0460">Magnesium</keyword>
<keyword id="KW-0479">Metal-binding</keyword>
<evidence type="ECO:0000250" key="1"/>
<evidence type="ECO:0000255" key="2">
    <source>
        <dbReference type="PROSITE-ProRule" id="PRU00794"/>
    </source>
</evidence>
<evidence type="ECO:0000255" key="3">
    <source>
        <dbReference type="RuleBase" id="RU003476"/>
    </source>
</evidence>
<evidence type="ECO:0000269" key="4">
    <source>
    </source>
</evidence>
<evidence type="ECO:0000303" key="5">
    <source>
    </source>
</evidence>
<evidence type="ECO:0000305" key="6"/>
<evidence type="ECO:0000312" key="7">
    <source>
        <dbReference type="EMBL" id="AFW17224.1"/>
    </source>
</evidence>
<evidence type="ECO:0007829" key="8">
    <source>
        <dbReference type="PDB" id="6YPF"/>
    </source>
</evidence>
<gene>
    <name evidence="5" type="primary">NUDIX1</name>
</gene>
<dbReference type="EC" id="3.6.1.68" evidence="4"/>
<dbReference type="EMBL" id="JQ820249">
    <property type="protein sequence ID" value="AFW17224.1"/>
    <property type="molecule type" value="mRNA"/>
</dbReference>
<dbReference type="PDB" id="6YPB">
    <property type="method" value="X-ray"/>
    <property type="resolution" value="1.70 A"/>
    <property type="chains" value="A=1-150"/>
</dbReference>
<dbReference type="PDB" id="6YPF">
    <property type="method" value="X-ray"/>
    <property type="resolution" value="1.45 A"/>
    <property type="chains" value="A=1-150"/>
</dbReference>
<dbReference type="PDBsum" id="6YPB"/>
<dbReference type="PDBsum" id="6YPF"/>
<dbReference type="SMR" id="M4I1C6"/>
<dbReference type="KEGG" id="ag:AFW17224"/>
<dbReference type="BioCyc" id="MetaCyc:MONOMER-19526"/>
<dbReference type="BRENDA" id="3.6.1.68">
    <property type="organism ID" value="7163"/>
</dbReference>
<dbReference type="GO" id="GO:0005829">
    <property type="term" value="C:cytosol"/>
    <property type="evidence" value="ECO:0007669"/>
    <property type="project" value="TreeGrafter"/>
</dbReference>
<dbReference type="GO" id="GO:0035539">
    <property type="term" value="F:8-oxo-7,8-dihydrodeoxyguanosine triphosphate pyrophosphatase activity"/>
    <property type="evidence" value="ECO:0007669"/>
    <property type="project" value="TreeGrafter"/>
</dbReference>
<dbReference type="GO" id="GO:0046872">
    <property type="term" value="F:metal ion binding"/>
    <property type="evidence" value="ECO:0007669"/>
    <property type="project" value="UniProtKB-KW"/>
</dbReference>
<dbReference type="GO" id="GO:0006203">
    <property type="term" value="P:dGTP catabolic process"/>
    <property type="evidence" value="ECO:0007669"/>
    <property type="project" value="TreeGrafter"/>
</dbReference>
<dbReference type="CDD" id="cd04678">
    <property type="entry name" value="NUDIX_MTH2_Nudt15"/>
    <property type="match status" value="1"/>
</dbReference>
<dbReference type="FunFam" id="3.90.79.10:FF:000060">
    <property type="entry name" value="Nudix hydrolase 1"/>
    <property type="match status" value="1"/>
</dbReference>
<dbReference type="Gene3D" id="3.90.79.10">
    <property type="entry name" value="Nucleoside Triphosphate Pyrophosphohydrolase"/>
    <property type="match status" value="1"/>
</dbReference>
<dbReference type="InterPro" id="IPR020476">
    <property type="entry name" value="Nudix_hydrolase"/>
</dbReference>
<dbReference type="InterPro" id="IPR015797">
    <property type="entry name" value="NUDIX_hydrolase-like_dom_sf"/>
</dbReference>
<dbReference type="InterPro" id="IPR020084">
    <property type="entry name" value="NUDIX_hydrolase_CS"/>
</dbReference>
<dbReference type="InterPro" id="IPR000086">
    <property type="entry name" value="NUDIX_hydrolase_dom"/>
</dbReference>
<dbReference type="PANTHER" id="PTHR16099">
    <property type="entry name" value="8-OXO-DGTP DIPHOSPHATES NUDT15"/>
    <property type="match status" value="1"/>
</dbReference>
<dbReference type="PANTHER" id="PTHR16099:SF5">
    <property type="entry name" value="NUCLEOTIDE TRIPHOSPHATE DIPHOSPHATASE NUDT15"/>
    <property type="match status" value="1"/>
</dbReference>
<dbReference type="Pfam" id="PF00293">
    <property type="entry name" value="NUDIX"/>
    <property type="match status" value="1"/>
</dbReference>
<dbReference type="PRINTS" id="PR00502">
    <property type="entry name" value="NUDIXFAMILY"/>
</dbReference>
<dbReference type="SUPFAM" id="SSF55811">
    <property type="entry name" value="Nudix"/>
    <property type="match status" value="1"/>
</dbReference>
<dbReference type="PROSITE" id="PS51462">
    <property type="entry name" value="NUDIX"/>
    <property type="match status" value="1"/>
</dbReference>
<dbReference type="PROSITE" id="PS00893">
    <property type="entry name" value="NUDIX_BOX"/>
    <property type="match status" value="1"/>
</dbReference>
<reference key="1">
    <citation type="journal article" date="2015" name="Science">
        <title>PLANT VOLATILES. Biosynthesis of monoterpene scent compounds in roses.</title>
        <authorList>
            <person name="Magnard J.L."/>
            <person name="Roccia A."/>
            <person name="Caissard J.C."/>
            <person name="Vergne P."/>
            <person name="Sun P."/>
            <person name="Hecquet R."/>
            <person name="Dubois A."/>
            <person name="Hibrand-Saint Oyant L."/>
            <person name="Jullien F."/>
            <person name="Nicole F."/>
            <person name="Raymond O."/>
            <person name="Huguet S."/>
            <person name="Baltenweck R."/>
            <person name="Meyer S."/>
            <person name="Claudel P."/>
            <person name="Jeauffre J."/>
            <person name="Rohmer M."/>
            <person name="Foucher F."/>
            <person name="Hugueney P."/>
            <person name="Bendahmane M."/>
            <person name="Baudino S."/>
        </authorList>
    </citation>
    <scope>NUCLEOTIDE SEQUENCE [MRNA]</scope>
    <scope>FUNCTION</scope>
    <scope>CATALYTIC ACTIVITY</scope>
    <scope>BIOPHYSICOCHEMICAL PROPERTIES</scope>
    <scope>TISSUE SPECIFICITY</scope>
    <scope>DEVELOPMENTAL STAGE</scope>
    <scope>SUBCELLULAR LOCATION</scope>
    <source>
        <strain>cv. Papa Meilland</strain>
    </source>
</reference>
<sequence>MGNETVVVAETAGSIKVAVVVCLLRGQNVLLGRRRSSLGDSTFSLPSGHLEFGESFEECAARELKEETDLDIGKIELLTVTNNLFLDEAKPSQYVAVFMRAVLADPRQEPQNIEPEFCDGWGWYEWDNLPKPLFWPLDNVVQDGFNPFPT</sequence>
<name>NUDT1_ROSHC</name>
<organism evidence="7">
    <name type="scientific">Rosa hybrid cultivar</name>
    <dbReference type="NCBI Taxonomy" id="128735"/>
    <lineage>
        <taxon>Eukaryota</taxon>
        <taxon>Viridiplantae</taxon>
        <taxon>Streptophyta</taxon>
        <taxon>Embryophyta</taxon>
        <taxon>Tracheophyta</taxon>
        <taxon>Spermatophyta</taxon>
        <taxon>Magnoliopsida</taxon>
        <taxon>eudicotyledons</taxon>
        <taxon>Gunneridae</taxon>
        <taxon>Pentapetalae</taxon>
        <taxon>rosids</taxon>
        <taxon>fabids</taxon>
        <taxon>Rosales</taxon>
        <taxon>Rosaceae</taxon>
        <taxon>Rosoideae</taxon>
        <taxon>Rosoideae incertae sedis</taxon>
        <taxon>Rosa</taxon>
    </lineage>
</organism>